<evidence type="ECO:0000255" key="1">
    <source>
        <dbReference type="HAMAP-Rule" id="MF_00178"/>
    </source>
</evidence>
<gene>
    <name evidence="1" type="primary">ribH</name>
    <name type="ordered locus">Shewmr7_1165</name>
</gene>
<dbReference type="EC" id="2.5.1.78" evidence="1"/>
<dbReference type="EMBL" id="CP000444">
    <property type="protein sequence ID" value="ABI42164.1"/>
    <property type="molecule type" value="Genomic_DNA"/>
</dbReference>
<dbReference type="SMR" id="Q0HXJ1"/>
<dbReference type="KEGG" id="shm:Shewmr7_1165"/>
<dbReference type="HOGENOM" id="CLU_089358_1_1_6"/>
<dbReference type="UniPathway" id="UPA00275">
    <property type="reaction ID" value="UER00404"/>
</dbReference>
<dbReference type="GO" id="GO:0005829">
    <property type="term" value="C:cytosol"/>
    <property type="evidence" value="ECO:0007669"/>
    <property type="project" value="TreeGrafter"/>
</dbReference>
<dbReference type="GO" id="GO:0009349">
    <property type="term" value="C:riboflavin synthase complex"/>
    <property type="evidence" value="ECO:0007669"/>
    <property type="project" value="InterPro"/>
</dbReference>
<dbReference type="GO" id="GO:0000906">
    <property type="term" value="F:6,7-dimethyl-8-ribityllumazine synthase activity"/>
    <property type="evidence" value="ECO:0007669"/>
    <property type="project" value="UniProtKB-UniRule"/>
</dbReference>
<dbReference type="GO" id="GO:0009231">
    <property type="term" value="P:riboflavin biosynthetic process"/>
    <property type="evidence" value="ECO:0007669"/>
    <property type="project" value="UniProtKB-UniRule"/>
</dbReference>
<dbReference type="CDD" id="cd09209">
    <property type="entry name" value="Lumazine_synthase-I"/>
    <property type="match status" value="1"/>
</dbReference>
<dbReference type="FunFam" id="3.40.50.960:FF:000001">
    <property type="entry name" value="6,7-dimethyl-8-ribityllumazine synthase"/>
    <property type="match status" value="1"/>
</dbReference>
<dbReference type="Gene3D" id="3.40.50.960">
    <property type="entry name" value="Lumazine/riboflavin synthase"/>
    <property type="match status" value="1"/>
</dbReference>
<dbReference type="HAMAP" id="MF_00178">
    <property type="entry name" value="Lumazine_synth"/>
    <property type="match status" value="1"/>
</dbReference>
<dbReference type="InterPro" id="IPR034964">
    <property type="entry name" value="LS"/>
</dbReference>
<dbReference type="InterPro" id="IPR002180">
    <property type="entry name" value="LS/RS"/>
</dbReference>
<dbReference type="InterPro" id="IPR036467">
    <property type="entry name" value="LS/RS_sf"/>
</dbReference>
<dbReference type="NCBIfam" id="TIGR00114">
    <property type="entry name" value="lumazine-synth"/>
    <property type="match status" value="1"/>
</dbReference>
<dbReference type="NCBIfam" id="NF000812">
    <property type="entry name" value="PRK00061.1-4"/>
    <property type="match status" value="1"/>
</dbReference>
<dbReference type="PANTHER" id="PTHR21058:SF0">
    <property type="entry name" value="6,7-DIMETHYL-8-RIBITYLLUMAZINE SYNTHASE"/>
    <property type="match status" value="1"/>
</dbReference>
<dbReference type="PANTHER" id="PTHR21058">
    <property type="entry name" value="6,7-DIMETHYL-8-RIBITYLLUMAZINE SYNTHASE DMRL SYNTHASE LUMAZINE SYNTHASE"/>
    <property type="match status" value="1"/>
</dbReference>
<dbReference type="Pfam" id="PF00885">
    <property type="entry name" value="DMRL_synthase"/>
    <property type="match status" value="1"/>
</dbReference>
<dbReference type="SUPFAM" id="SSF52121">
    <property type="entry name" value="Lumazine synthase"/>
    <property type="match status" value="1"/>
</dbReference>
<accession>Q0HXJ1</accession>
<comment type="function">
    <text evidence="1">Catalyzes the formation of 6,7-dimethyl-8-ribityllumazine by condensation of 5-amino-6-(D-ribitylamino)uracil with 3,4-dihydroxy-2-butanone 4-phosphate. This is the penultimate step in the biosynthesis of riboflavin.</text>
</comment>
<comment type="catalytic activity">
    <reaction evidence="1">
        <text>(2S)-2-hydroxy-3-oxobutyl phosphate + 5-amino-6-(D-ribitylamino)uracil = 6,7-dimethyl-8-(1-D-ribityl)lumazine + phosphate + 2 H2O + H(+)</text>
        <dbReference type="Rhea" id="RHEA:26152"/>
        <dbReference type="ChEBI" id="CHEBI:15377"/>
        <dbReference type="ChEBI" id="CHEBI:15378"/>
        <dbReference type="ChEBI" id="CHEBI:15934"/>
        <dbReference type="ChEBI" id="CHEBI:43474"/>
        <dbReference type="ChEBI" id="CHEBI:58201"/>
        <dbReference type="ChEBI" id="CHEBI:58830"/>
        <dbReference type="EC" id="2.5.1.78"/>
    </reaction>
</comment>
<comment type="pathway">
    <text evidence="1">Cofactor biosynthesis; riboflavin biosynthesis; riboflavin from 2-hydroxy-3-oxobutyl phosphate and 5-amino-6-(D-ribitylamino)uracil: step 1/2.</text>
</comment>
<comment type="subunit">
    <text evidence="1">Forms an icosahedral capsid composed of 60 subunits, arranged as a dodecamer of pentamers.</text>
</comment>
<comment type="similarity">
    <text evidence="1">Belongs to the DMRL synthase family.</text>
</comment>
<proteinExistence type="inferred from homology"/>
<protein>
    <recommendedName>
        <fullName evidence="1">6,7-dimethyl-8-ribityllumazine synthase</fullName>
        <shortName evidence="1">DMRL synthase</shortName>
        <shortName evidence="1">LS</shortName>
        <shortName evidence="1">Lumazine synthase</shortName>
        <ecNumber evidence="1">2.5.1.78</ecNumber>
    </recommendedName>
</protein>
<feature type="chain" id="PRO_1000040514" description="6,7-dimethyl-8-ribityllumazine synthase">
    <location>
        <begin position="1"/>
        <end position="158"/>
    </location>
</feature>
<feature type="active site" description="Proton donor" evidence="1">
    <location>
        <position position="89"/>
    </location>
</feature>
<feature type="binding site" evidence="1">
    <location>
        <position position="22"/>
    </location>
    <ligand>
        <name>5-amino-6-(D-ribitylamino)uracil</name>
        <dbReference type="ChEBI" id="CHEBI:15934"/>
    </ligand>
</feature>
<feature type="binding site" evidence="1">
    <location>
        <begin position="57"/>
        <end position="59"/>
    </location>
    <ligand>
        <name>5-amino-6-(D-ribitylamino)uracil</name>
        <dbReference type="ChEBI" id="CHEBI:15934"/>
    </ligand>
</feature>
<feature type="binding site" evidence="1">
    <location>
        <begin position="81"/>
        <end position="83"/>
    </location>
    <ligand>
        <name>5-amino-6-(D-ribitylamino)uracil</name>
        <dbReference type="ChEBI" id="CHEBI:15934"/>
    </ligand>
</feature>
<feature type="binding site" evidence="1">
    <location>
        <begin position="86"/>
        <end position="87"/>
    </location>
    <ligand>
        <name>(2S)-2-hydroxy-3-oxobutyl phosphate</name>
        <dbReference type="ChEBI" id="CHEBI:58830"/>
    </ligand>
</feature>
<feature type="binding site" evidence="1">
    <location>
        <position position="114"/>
    </location>
    <ligand>
        <name>5-amino-6-(D-ribitylamino)uracil</name>
        <dbReference type="ChEBI" id="CHEBI:15934"/>
    </ligand>
</feature>
<feature type="binding site" evidence="1">
    <location>
        <position position="128"/>
    </location>
    <ligand>
        <name>(2S)-2-hydroxy-3-oxobutyl phosphate</name>
        <dbReference type="ChEBI" id="CHEBI:58830"/>
    </ligand>
</feature>
<reference key="1">
    <citation type="submission" date="2006-08" db="EMBL/GenBank/DDBJ databases">
        <title>Complete sequence of chromosome 1 of Shewanella sp. MR-7.</title>
        <authorList>
            <person name="Copeland A."/>
            <person name="Lucas S."/>
            <person name="Lapidus A."/>
            <person name="Barry K."/>
            <person name="Detter J.C."/>
            <person name="Glavina del Rio T."/>
            <person name="Hammon N."/>
            <person name="Israni S."/>
            <person name="Dalin E."/>
            <person name="Tice H."/>
            <person name="Pitluck S."/>
            <person name="Kiss H."/>
            <person name="Brettin T."/>
            <person name="Bruce D."/>
            <person name="Han C."/>
            <person name="Tapia R."/>
            <person name="Gilna P."/>
            <person name="Schmutz J."/>
            <person name="Larimer F."/>
            <person name="Land M."/>
            <person name="Hauser L."/>
            <person name="Kyrpides N."/>
            <person name="Mikhailova N."/>
            <person name="Nealson K."/>
            <person name="Konstantinidis K."/>
            <person name="Klappenbach J."/>
            <person name="Tiedje J."/>
            <person name="Richardson P."/>
        </authorList>
    </citation>
    <scope>NUCLEOTIDE SEQUENCE [LARGE SCALE GENOMIC DNA]</scope>
    <source>
        <strain>MR-7</strain>
    </source>
</reference>
<name>RISB_SHESR</name>
<keyword id="KW-0686">Riboflavin biosynthesis</keyword>
<keyword id="KW-0808">Transferase</keyword>
<organism>
    <name type="scientific">Shewanella sp. (strain MR-7)</name>
    <dbReference type="NCBI Taxonomy" id="60481"/>
    <lineage>
        <taxon>Bacteria</taxon>
        <taxon>Pseudomonadati</taxon>
        <taxon>Pseudomonadota</taxon>
        <taxon>Gammaproteobacteria</taxon>
        <taxon>Alteromonadales</taxon>
        <taxon>Shewanellaceae</taxon>
        <taxon>Shewanella</taxon>
    </lineage>
</organism>
<sequence length="158" mass="16689">MNVVQGNIEAKNAKVAIVISRFNSFLVESLLEGALDTLKRFGQVSDENITVVRVPGAVELPLAARRVAASGKFDGIIALGAVIRGGTPHFDFVAGECNKGLAQIALEFDLPVAFGVLTTDTIEQAIERSGTKAGNKGGEAALSLLEMVNVLQQLEQQL</sequence>